<gene>
    <name type="primary">yhbP</name>
    <name type="ordered locus">SF3195</name>
    <name type="ordered locus">S3412</name>
</gene>
<name>YHBP_SHIFL</name>
<sequence length="147" mass="16776">METLIAISRWLAKQHVVTWCVQQEGELWCANAFYLFDAQKVAFYILTEEKTRHAQMSGPQAAVAGTVNGQPKTVALIRGVQFKGEIRRLEGEESDLARKAYNRRFPVARMLSAPVWEIRLDEIKFTDNTLGFGKKMIWLRDSGTEQA</sequence>
<protein>
    <recommendedName>
        <fullName>UPF0306 protein YhbP</fullName>
    </recommendedName>
</protein>
<organism>
    <name type="scientific">Shigella flexneri</name>
    <dbReference type="NCBI Taxonomy" id="623"/>
    <lineage>
        <taxon>Bacteria</taxon>
        <taxon>Pseudomonadati</taxon>
        <taxon>Pseudomonadota</taxon>
        <taxon>Gammaproteobacteria</taxon>
        <taxon>Enterobacterales</taxon>
        <taxon>Enterobacteriaceae</taxon>
        <taxon>Shigella</taxon>
    </lineage>
</organism>
<comment type="similarity">
    <text evidence="1">Belongs to the UPF0306 family.</text>
</comment>
<accession>P67763</accession>
<accession>P45471</accession>
<feature type="chain" id="PRO_0000214868" description="UPF0306 protein YhbP">
    <location>
        <begin position="1"/>
        <end position="147"/>
    </location>
</feature>
<reference key="1">
    <citation type="journal article" date="2002" name="Nucleic Acids Res.">
        <title>Genome sequence of Shigella flexneri 2a: insights into pathogenicity through comparison with genomes of Escherichia coli K12 and O157.</title>
        <authorList>
            <person name="Jin Q."/>
            <person name="Yuan Z."/>
            <person name="Xu J."/>
            <person name="Wang Y."/>
            <person name="Shen Y."/>
            <person name="Lu W."/>
            <person name="Wang J."/>
            <person name="Liu H."/>
            <person name="Yang J."/>
            <person name="Yang F."/>
            <person name="Zhang X."/>
            <person name="Zhang J."/>
            <person name="Yang G."/>
            <person name="Wu H."/>
            <person name="Qu D."/>
            <person name="Dong J."/>
            <person name="Sun L."/>
            <person name="Xue Y."/>
            <person name="Zhao A."/>
            <person name="Gao Y."/>
            <person name="Zhu J."/>
            <person name="Kan B."/>
            <person name="Ding K."/>
            <person name="Chen S."/>
            <person name="Cheng H."/>
            <person name="Yao Z."/>
            <person name="He B."/>
            <person name="Chen R."/>
            <person name="Ma D."/>
            <person name="Qiang B."/>
            <person name="Wen Y."/>
            <person name="Hou Y."/>
            <person name="Yu J."/>
        </authorList>
    </citation>
    <scope>NUCLEOTIDE SEQUENCE [LARGE SCALE GENOMIC DNA]</scope>
    <source>
        <strain>301 / Serotype 2a</strain>
    </source>
</reference>
<reference key="2">
    <citation type="journal article" date="2003" name="Infect. Immun.">
        <title>Complete genome sequence and comparative genomics of Shigella flexneri serotype 2a strain 2457T.</title>
        <authorList>
            <person name="Wei J."/>
            <person name="Goldberg M.B."/>
            <person name="Burland V."/>
            <person name="Venkatesan M.M."/>
            <person name="Deng W."/>
            <person name="Fournier G."/>
            <person name="Mayhew G.F."/>
            <person name="Plunkett G. III"/>
            <person name="Rose D.J."/>
            <person name="Darling A."/>
            <person name="Mau B."/>
            <person name="Perna N.T."/>
            <person name="Payne S.M."/>
            <person name="Runyen-Janecky L.J."/>
            <person name="Zhou S."/>
            <person name="Schwartz D.C."/>
            <person name="Blattner F.R."/>
        </authorList>
    </citation>
    <scope>NUCLEOTIDE SEQUENCE [LARGE SCALE GENOMIC DNA]</scope>
    <source>
        <strain>ATCC 700930 / 2457T / Serotype 2a</strain>
    </source>
</reference>
<proteinExistence type="inferred from homology"/>
<dbReference type="EMBL" id="AE005674">
    <property type="protein sequence ID" value="AAN44662.1"/>
    <property type="molecule type" value="Genomic_DNA"/>
</dbReference>
<dbReference type="EMBL" id="AE014073">
    <property type="protein sequence ID" value="AAP18476.1"/>
    <property type="molecule type" value="Genomic_DNA"/>
</dbReference>
<dbReference type="RefSeq" id="NP_708955.1">
    <property type="nucleotide sequence ID" value="NC_004337.2"/>
</dbReference>
<dbReference type="RefSeq" id="WP_000449030.1">
    <property type="nucleotide sequence ID" value="NZ_WPGW01000004.1"/>
</dbReference>
<dbReference type="SMR" id="P67763"/>
<dbReference type="STRING" id="198214.SF3195"/>
<dbReference type="PaxDb" id="198214-SF3195"/>
<dbReference type="GeneID" id="1027138"/>
<dbReference type="KEGG" id="sfl:SF3195"/>
<dbReference type="KEGG" id="sfx:S3412"/>
<dbReference type="PATRIC" id="fig|198214.7.peg.3794"/>
<dbReference type="HOGENOM" id="CLU_105087_3_0_6"/>
<dbReference type="Proteomes" id="UP000001006">
    <property type="component" value="Chromosome"/>
</dbReference>
<dbReference type="Proteomes" id="UP000002673">
    <property type="component" value="Chromosome"/>
</dbReference>
<dbReference type="FunFam" id="2.30.110.10:FF:000003">
    <property type="entry name" value="UPF0306 protein YhbP"/>
    <property type="match status" value="1"/>
</dbReference>
<dbReference type="Gene3D" id="2.30.110.10">
    <property type="entry name" value="Electron Transport, Fmn-binding Protein, Chain A"/>
    <property type="match status" value="1"/>
</dbReference>
<dbReference type="HAMAP" id="MF_00764">
    <property type="entry name" value="UPF0306"/>
    <property type="match status" value="1"/>
</dbReference>
<dbReference type="InterPro" id="IPR012349">
    <property type="entry name" value="Split_barrel_FMN-bd"/>
</dbReference>
<dbReference type="InterPro" id="IPR011194">
    <property type="entry name" value="UPF0306"/>
</dbReference>
<dbReference type="NCBIfam" id="NF002900">
    <property type="entry name" value="PRK03467.1"/>
    <property type="match status" value="1"/>
</dbReference>
<dbReference type="PIRSF" id="PIRSF009554">
    <property type="entry name" value="UCP009554"/>
    <property type="match status" value="1"/>
</dbReference>
<dbReference type="SUPFAM" id="SSF50475">
    <property type="entry name" value="FMN-binding split barrel"/>
    <property type="match status" value="1"/>
</dbReference>
<evidence type="ECO:0000305" key="1"/>
<keyword id="KW-1185">Reference proteome</keyword>